<comment type="function">
    <text evidence="1">Catalyzes the 2'-O-methylation of the ribose of cytidine 1402 (C1402) in 16S rRNA.</text>
</comment>
<comment type="catalytic activity">
    <reaction evidence="1">
        <text>cytidine(1402) in 16S rRNA + S-adenosyl-L-methionine = 2'-O-methylcytidine(1402) in 16S rRNA + S-adenosyl-L-homocysteine + H(+)</text>
        <dbReference type="Rhea" id="RHEA:42924"/>
        <dbReference type="Rhea" id="RHEA-COMP:10285"/>
        <dbReference type="Rhea" id="RHEA-COMP:10286"/>
        <dbReference type="ChEBI" id="CHEBI:15378"/>
        <dbReference type="ChEBI" id="CHEBI:57856"/>
        <dbReference type="ChEBI" id="CHEBI:59789"/>
        <dbReference type="ChEBI" id="CHEBI:74495"/>
        <dbReference type="ChEBI" id="CHEBI:82748"/>
        <dbReference type="EC" id="2.1.1.198"/>
    </reaction>
</comment>
<comment type="subcellular location">
    <subcellularLocation>
        <location evidence="1">Cytoplasm</location>
    </subcellularLocation>
</comment>
<comment type="similarity">
    <text evidence="1">Belongs to the methyltransferase superfamily. RsmI family.</text>
</comment>
<reference key="1">
    <citation type="submission" date="2006-11" db="EMBL/GenBank/DDBJ databases">
        <title>Sequence of Campylobacter fetus subsp. fetus 82-40.</title>
        <authorList>
            <person name="Fouts D.E."/>
            <person name="Nelson K.E."/>
        </authorList>
    </citation>
    <scope>NUCLEOTIDE SEQUENCE [LARGE SCALE GENOMIC DNA]</scope>
    <source>
        <strain>82-40</strain>
    </source>
</reference>
<evidence type="ECO:0000255" key="1">
    <source>
        <dbReference type="HAMAP-Rule" id="MF_01877"/>
    </source>
</evidence>
<protein>
    <recommendedName>
        <fullName evidence="1">Ribosomal RNA small subunit methyltransferase I</fullName>
        <ecNumber evidence="1">2.1.1.198</ecNumber>
    </recommendedName>
    <alternativeName>
        <fullName evidence="1">16S rRNA 2'-O-ribose C1402 methyltransferase</fullName>
    </alternativeName>
    <alternativeName>
        <fullName evidence="1">rRNA (cytidine-2'-O-)-methyltransferase RsmI</fullName>
    </alternativeName>
</protein>
<keyword id="KW-0963">Cytoplasm</keyword>
<keyword id="KW-0489">Methyltransferase</keyword>
<keyword id="KW-0698">rRNA processing</keyword>
<keyword id="KW-0949">S-adenosyl-L-methionine</keyword>
<keyword id="KW-0808">Transferase</keyword>
<sequence length="271" mass="30486">MLYFLPTPIGNLDDISKRCLDVLELCEIIICEDTRVTKSLITLLNAKFGLQISPKEFYSLHTHNEKDFFDKFDKVRLETKICIYASDAGMPCISDPGISLVKFAQQNSIKYEVLSGANALLLAAAASGIIEKEFTFLGFLPNLGKERAIAIQNALNSLYPVIIYESPKRILSLIKSISEFDPLREVFIIKEATKKFEAKFKNSATNLLTQLENSNLNGEWCVVIDRSANKALERITTKDIMELDLPLKQKAKLISKITGENAKKIYQNLIT</sequence>
<dbReference type="EC" id="2.1.1.198" evidence="1"/>
<dbReference type="EMBL" id="CP000487">
    <property type="protein sequence ID" value="ABK83041.1"/>
    <property type="molecule type" value="Genomic_DNA"/>
</dbReference>
<dbReference type="RefSeq" id="WP_011731765.1">
    <property type="nucleotide sequence ID" value="NC_008599.1"/>
</dbReference>
<dbReference type="SMR" id="A0RMQ7"/>
<dbReference type="GeneID" id="61064132"/>
<dbReference type="KEGG" id="cff:CFF8240_0288"/>
<dbReference type="eggNOG" id="COG0313">
    <property type="taxonomic scope" value="Bacteria"/>
</dbReference>
<dbReference type="HOGENOM" id="CLU_044779_4_0_7"/>
<dbReference type="Proteomes" id="UP000000760">
    <property type="component" value="Chromosome"/>
</dbReference>
<dbReference type="GO" id="GO:0005737">
    <property type="term" value="C:cytoplasm"/>
    <property type="evidence" value="ECO:0007669"/>
    <property type="project" value="UniProtKB-SubCell"/>
</dbReference>
<dbReference type="GO" id="GO:0070677">
    <property type="term" value="F:rRNA (cytosine-2'-O-)-methyltransferase activity"/>
    <property type="evidence" value="ECO:0007669"/>
    <property type="project" value="UniProtKB-UniRule"/>
</dbReference>
<dbReference type="Gene3D" id="3.40.1010.10">
    <property type="entry name" value="Cobalt-precorrin-4 Transmethylase, Domain 1"/>
    <property type="match status" value="1"/>
</dbReference>
<dbReference type="Gene3D" id="3.30.950.10">
    <property type="entry name" value="Methyltransferase, Cobalt-precorrin-4 Transmethylase, Domain 2"/>
    <property type="match status" value="1"/>
</dbReference>
<dbReference type="HAMAP" id="MF_01877">
    <property type="entry name" value="16SrRNA_methyltr_I"/>
    <property type="match status" value="1"/>
</dbReference>
<dbReference type="InterPro" id="IPR000878">
    <property type="entry name" value="4pyrrol_Mease"/>
</dbReference>
<dbReference type="InterPro" id="IPR035996">
    <property type="entry name" value="4pyrrol_Methylase_sf"/>
</dbReference>
<dbReference type="InterPro" id="IPR014777">
    <property type="entry name" value="4pyrrole_Mease_sub1"/>
</dbReference>
<dbReference type="InterPro" id="IPR014776">
    <property type="entry name" value="4pyrrole_Mease_sub2"/>
</dbReference>
<dbReference type="InterPro" id="IPR008189">
    <property type="entry name" value="rRNA_ssu_MeTfrase_I"/>
</dbReference>
<dbReference type="InterPro" id="IPR018063">
    <property type="entry name" value="SAM_MeTrfase_RsmI_CS"/>
</dbReference>
<dbReference type="NCBIfam" id="TIGR00096">
    <property type="entry name" value="16S rRNA (cytidine(1402)-2'-O)-methyltransferase"/>
    <property type="match status" value="1"/>
</dbReference>
<dbReference type="PANTHER" id="PTHR46111">
    <property type="entry name" value="RIBOSOMAL RNA SMALL SUBUNIT METHYLTRANSFERASE I"/>
    <property type="match status" value="1"/>
</dbReference>
<dbReference type="PANTHER" id="PTHR46111:SF1">
    <property type="entry name" value="RIBOSOMAL RNA SMALL SUBUNIT METHYLTRANSFERASE I"/>
    <property type="match status" value="1"/>
</dbReference>
<dbReference type="Pfam" id="PF00590">
    <property type="entry name" value="TP_methylase"/>
    <property type="match status" value="1"/>
</dbReference>
<dbReference type="PIRSF" id="PIRSF005917">
    <property type="entry name" value="MTase_YraL"/>
    <property type="match status" value="1"/>
</dbReference>
<dbReference type="SUPFAM" id="SSF53790">
    <property type="entry name" value="Tetrapyrrole methylase"/>
    <property type="match status" value="1"/>
</dbReference>
<dbReference type="PROSITE" id="PS01296">
    <property type="entry name" value="RSMI"/>
    <property type="match status" value="1"/>
</dbReference>
<accession>A0RMQ7</accession>
<gene>
    <name evidence="1" type="primary">rsmI</name>
    <name type="ordered locus">CFF8240_0288</name>
</gene>
<feature type="chain" id="PRO_0000394484" description="Ribosomal RNA small subunit methyltransferase I">
    <location>
        <begin position="1"/>
        <end position="271"/>
    </location>
</feature>
<organism>
    <name type="scientific">Campylobacter fetus subsp. fetus (strain 82-40)</name>
    <dbReference type="NCBI Taxonomy" id="360106"/>
    <lineage>
        <taxon>Bacteria</taxon>
        <taxon>Pseudomonadati</taxon>
        <taxon>Campylobacterota</taxon>
        <taxon>Epsilonproteobacteria</taxon>
        <taxon>Campylobacterales</taxon>
        <taxon>Campylobacteraceae</taxon>
        <taxon>Campylobacter</taxon>
    </lineage>
</organism>
<name>RSMI_CAMFF</name>
<proteinExistence type="inferred from homology"/>